<sequence length="206" mass="23411">MARYIGPVGKVSRRLGIGITEKGLRILNKRSDPPGQHGAAARRRQLSDYGMQLREKQKAKFLYGVLERQFRRLFEQASRRSGVTGEYLLSLLERRLDNVVYRLGFATTRAQARQLVNHGHIVVDGRKTNIPSYTVKVGQVIAVRPQSRSRTYFKNLVDSGVLNKHRAPEWLRLNAAELSGTVVALPRREDAEAGINEQLIVEFYSR</sequence>
<organism>
    <name type="scientific">Chloroflexus aurantiacus (strain ATCC 29364 / DSM 637 / Y-400-fl)</name>
    <dbReference type="NCBI Taxonomy" id="480224"/>
    <lineage>
        <taxon>Bacteria</taxon>
        <taxon>Bacillati</taxon>
        <taxon>Chloroflexota</taxon>
        <taxon>Chloroflexia</taxon>
        <taxon>Chloroflexales</taxon>
        <taxon>Chloroflexineae</taxon>
        <taxon>Chloroflexaceae</taxon>
        <taxon>Chloroflexus</taxon>
    </lineage>
</organism>
<evidence type="ECO:0000255" key="1">
    <source>
        <dbReference type="HAMAP-Rule" id="MF_01306"/>
    </source>
</evidence>
<evidence type="ECO:0000305" key="2"/>
<dbReference type="EMBL" id="CP001364">
    <property type="protein sequence ID" value="ACM53974.1"/>
    <property type="molecule type" value="Genomic_DNA"/>
</dbReference>
<dbReference type="SMR" id="B9LJF8"/>
<dbReference type="KEGG" id="chl:Chy400_2582"/>
<dbReference type="HOGENOM" id="CLU_092403_0_1_0"/>
<dbReference type="OrthoDB" id="9803672at2"/>
<dbReference type="GO" id="GO:0015935">
    <property type="term" value="C:small ribosomal subunit"/>
    <property type="evidence" value="ECO:0007669"/>
    <property type="project" value="InterPro"/>
</dbReference>
<dbReference type="GO" id="GO:0019843">
    <property type="term" value="F:rRNA binding"/>
    <property type="evidence" value="ECO:0007669"/>
    <property type="project" value="UniProtKB-UniRule"/>
</dbReference>
<dbReference type="GO" id="GO:0003735">
    <property type="term" value="F:structural constituent of ribosome"/>
    <property type="evidence" value="ECO:0007669"/>
    <property type="project" value="InterPro"/>
</dbReference>
<dbReference type="GO" id="GO:0042274">
    <property type="term" value="P:ribosomal small subunit biogenesis"/>
    <property type="evidence" value="ECO:0007669"/>
    <property type="project" value="TreeGrafter"/>
</dbReference>
<dbReference type="GO" id="GO:0006412">
    <property type="term" value="P:translation"/>
    <property type="evidence" value="ECO:0007669"/>
    <property type="project" value="UniProtKB-UniRule"/>
</dbReference>
<dbReference type="CDD" id="cd00165">
    <property type="entry name" value="S4"/>
    <property type="match status" value="1"/>
</dbReference>
<dbReference type="FunFam" id="3.10.290.10:FF:000001">
    <property type="entry name" value="30S ribosomal protein S4"/>
    <property type="match status" value="1"/>
</dbReference>
<dbReference type="Gene3D" id="1.10.1050.10">
    <property type="entry name" value="Ribosomal Protein S4 Delta 41, Chain A, domain 1"/>
    <property type="match status" value="1"/>
</dbReference>
<dbReference type="Gene3D" id="3.10.290.10">
    <property type="entry name" value="RNA-binding S4 domain"/>
    <property type="match status" value="1"/>
</dbReference>
<dbReference type="HAMAP" id="MF_01306_B">
    <property type="entry name" value="Ribosomal_uS4_B"/>
    <property type="match status" value="1"/>
</dbReference>
<dbReference type="InterPro" id="IPR022801">
    <property type="entry name" value="Ribosomal_uS4"/>
</dbReference>
<dbReference type="InterPro" id="IPR005709">
    <property type="entry name" value="Ribosomal_uS4_bac-type"/>
</dbReference>
<dbReference type="InterPro" id="IPR018079">
    <property type="entry name" value="Ribosomal_uS4_CS"/>
</dbReference>
<dbReference type="InterPro" id="IPR001912">
    <property type="entry name" value="Ribosomal_uS4_N"/>
</dbReference>
<dbReference type="InterPro" id="IPR002942">
    <property type="entry name" value="S4_RNA-bd"/>
</dbReference>
<dbReference type="InterPro" id="IPR036986">
    <property type="entry name" value="S4_RNA-bd_sf"/>
</dbReference>
<dbReference type="NCBIfam" id="NF003717">
    <property type="entry name" value="PRK05327.1"/>
    <property type="match status" value="1"/>
</dbReference>
<dbReference type="NCBIfam" id="TIGR01017">
    <property type="entry name" value="rpsD_bact"/>
    <property type="match status" value="1"/>
</dbReference>
<dbReference type="PANTHER" id="PTHR11831">
    <property type="entry name" value="30S 40S RIBOSOMAL PROTEIN"/>
    <property type="match status" value="1"/>
</dbReference>
<dbReference type="PANTHER" id="PTHR11831:SF4">
    <property type="entry name" value="SMALL RIBOSOMAL SUBUNIT PROTEIN US4M"/>
    <property type="match status" value="1"/>
</dbReference>
<dbReference type="Pfam" id="PF00163">
    <property type="entry name" value="Ribosomal_S4"/>
    <property type="match status" value="1"/>
</dbReference>
<dbReference type="Pfam" id="PF01479">
    <property type="entry name" value="S4"/>
    <property type="match status" value="1"/>
</dbReference>
<dbReference type="SMART" id="SM01390">
    <property type="entry name" value="Ribosomal_S4"/>
    <property type="match status" value="1"/>
</dbReference>
<dbReference type="SMART" id="SM00363">
    <property type="entry name" value="S4"/>
    <property type="match status" value="1"/>
</dbReference>
<dbReference type="SUPFAM" id="SSF55174">
    <property type="entry name" value="Alpha-L RNA-binding motif"/>
    <property type="match status" value="1"/>
</dbReference>
<dbReference type="PROSITE" id="PS00632">
    <property type="entry name" value="RIBOSOMAL_S4"/>
    <property type="match status" value="1"/>
</dbReference>
<dbReference type="PROSITE" id="PS50889">
    <property type="entry name" value="S4"/>
    <property type="match status" value="1"/>
</dbReference>
<proteinExistence type="inferred from homology"/>
<accession>B9LJF8</accession>
<feature type="chain" id="PRO_1000165393" description="Small ribosomal subunit protein uS4">
    <location>
        <begin position="1"/>
        <end position="206"/>
    </location>
</feature>
<feature type="domain" description="S4 RNA-binding" evidence="1">
    <location>
        <begin position="94"/>
        <end position="157"/>
    </location>
</feature>
<reference key="1">
    <citation type="submission" date="2009-01" db="EMBL/GenBank/DDBJ databases">
        <title>Complete sequence of Chloroflexus sp. Y-400-fl.</title>
        <authorList>
            <consortium name="US DOE Joint Genome Institute"/>
            <person name="Lucas S."/>
            <person name="Copeland A."/>
            <person name="Lapidus A."/>
            <person name="Glavina del Rio T."/>
            <person name="Dalin E."/>
            <person name="Tice H."/>
            <person name="Bruce D."/>
            <person name="Goodwin L."/>
            <person name="Pitluck S."/>
            <person name="Sims D."/>
            <person name="Kiss H."/>
            <person name="Brettin T."/>
            <person name="Detter J.C."/>
            <person name="Han C."/>
            <person name="Larimer F."/>
            <person name="Land M."/>
            <person name="Hauser L."/>
            <person name="Kyrpides N."/>
            <person name="Ovchinnikova G."/>
            <person name="Bryant D.A."/>
            <person name="Richardson P."/>
        </authorList>
    </citation>
    <scope>NUCLEOTIDE SEQUENCE [LARGE SCALE GENOMIC DNA]</scope>
    <source>
        <strain>ATCC 29364 / DSM 637 / Y-400-fl</strain>
    </source>
</reference>
<comment type="function">
    <text evidence="1">One of the primary rRNA binding proteins, it binds directly to 16S rRNA where it nucleates assembly of the body of the 30S subunit.</text>
</comment>
<comment type="function">
    <text evidence="1">With S5 and S12 plays an important role in translational accuracy.</text>
</comment>
<comment type="subunit">
    <text evidence="1">Part of the 30S ribosomal subunit. Contacts protein S5. The interaction surface between S4 and S5 is involved in control of translational fidelity.</text>
</comment>
<comment type="similarity">
    <text evidence="1">Belongs to the universal ribosomal protein uS4 family.</text>
</comment>
<keyword id="KW-0687">Ribonucleoprotein</keyword>
<keyword id="KW-0689">Ribosomal protein</keyword>
<keyword id="KW-0694">RNA-binding</keyword>
<keyword id="KW-0699">rRNA-binding</keyword>
<name>RS4_CHLSY</name>
<gene>
    <name evidence="1" type="primary">rpsD</name>
    <name type="ordered locus">Chy400_2582</name>
</gene>
<protein>
    <recommendedName>
        <fullName evidence="1">Small ribosomal subunit protein uS4</fullName>
    </recommendedName>
    <alternativeName>
        <fullName evidence="2">30S ribosomal protein S4</fullName>
    </alternativeName>
</protein>